<proteinExistence type="inferred from homology"/>
<name>RECF_FRATW</name>
<gene>
    <name evidence="1" type="primary">recF</name>
    <name type="ordered locus">FTW_0673</name>
</gene>
<protein>
    <recommendedName>
        <fullName evidence="1">DNA replication and repair protein RecF</fullName>
    </recommendedName>
</protein>
<feature type="chain" id="PRO_1000205493" description="DNA replication and repair protein RecF">
    <location>
        <begin position="1"/>
        <end position="349"/>
    </location>
</feature>
<feature type="binding site" evidence="1">
    <location>
        <begin position="30"/>
        <end position="37"/>
    </location>
    <ligand>
        <name>ATP</name>
        <dbReference type="ChEBI" id="CHEBI:30616"/>
    </ligand>
</feature>
<dbReference type="EMBL" id="CP000608">
    <property type="protein sequence ID" value="ABO46566.1"/>
    <property type="molecule type" value="Genomic_DNA"/>
</dbReference>
<dbReference type="RefSeq" id="WP_003020619.1">
    <property type="nucleotide sequence ID" value="NC_009257.1"/>
</dbReference>
<dbReference type="SMR" id="A4IXB4"/>
<dbReference type="KEGG" id="ftw:FTW_0673"/>
<dbReference type="HOGENOM" id="CLU_040267_0_0_6"/>
<dbReference type="GO" id="GO:0005737">
    <property type="term" value="C:cytoplasm"/>
    <property type="evidence" value="ECO:0007669"/>
    <property type="project" value="UniProtKB-SubCell"/>
</dbReference>
<dbReference type="GO" id="GO:0005524">
    <property type="term" value="F:ATP binding"/>
    <property type="evidence" value="ECO:0007669"/>
    <property type="project" value="UniProtKB-UniRule"/>
</dbReference>
<dbReference type="GO" id="GO:0003697">
    <property type="term" value="F:single-stranded DNA binding"/>
    <property type="evidence" value="ECO:0007669"/>
    <property type="project" value="UniProtKB-UniRule"/>
</dbReference>
<dbReference type="GO" id="GO:0006260">
    <property type="term" value="P:DNA replication"/>
    <property type="evidence" value="ECO:0007669"/>
    <property type="project" value="UniProtKB-UniRule"/>
</dbReference>
<dbReference type="GO" id="GO:0000731">
    <property type="term" value="P:DNA synthesis involved in DNA repair"/>
    <property type="evidence" value="ECO:0007669"/>
    <property type="project" value="TreeGrafter"/>
</dbReference>
<dbReference type="GO" id="GO:0006302">
    <property type="term" value="P:double-strand break repair"/>
    <property type="evidence" value="ECO:0007669"/>
    <property type="project" value="TreeGrafter"/>
</dbReference>
<dbReference type="GO" id="GO:0009432">
    <property type="term" value="P:SOS response"/>
    <property type="evidence" value="ECO:0007669"/>
    <property type="project" value="UniProtKB-UniRule"/>
</dbReference>
<dbReference type="Gene3D" id="3.40.50.300">
    <property type="entry name" value="P-loop containing nucleotide triphosphate hydrolases"/>
    <property type="match status" value="1"/>
</dbReference>
<dbReference type="Gene3D" id="1.20.1050.90">
    <property type="entry name" value="RecF/RecN/SMC, N-terminal domain"/>
    <property type="match status" value="1"/>
</dbReference>
<dbReference type="HAMAP" id="MF_00365">
    <property type="entry name" value="RecF"/>
    <property type="match status" value="1"/>
</dbReference>
<dbReference type="InterPro" id="IPR001238">
    <property type="entry name" value="DNA-binding_RecF"/>
</dbReference>
<dbReference type="InterPro" id="IPR018078">
    <property type="entry name" value="DNA-binding_RecF_CS"/>
</dbReference>
<dbReference type="InterPro" id="IPR027417">
    <property type="entry name" value="P-loop_NTPase"/>
</dbReference>
<dbReference type="InterPro" id="IPR003395">
    <property type="entry name" value="RecF/RecN/SMC_N"/>
</dbReference>
<dbReference type="InterPro" id="IPR042174">
    <property type="entry name" value="RecF_2"/>
</dbReference>
<dbReference type="NCBIfam" id="TIGR00611">
    <property type="entry name" value="recf"/>
    <property type="match status" value="1"/>
</dbReference>
<dbReference type="PANTHER" id="PTHR32182">
    <property type="entry name" value="DNA REPLICATION AND REPAIR PROTEIN RECF"/>
    <property type="match status" value="1"/>
</dbReference>
<dbReference type="PANTHER" id="PTHR32182:SF0">
    <property type="entry name" value="DNA REPLICATION AND REPAIR PROTEIN RECF"/>
    <property type="match status" value="1"/>
</dbReference>
<dbReference type="Pfam" id="PF02463">
    <property type="entry name" value="SMC_N"/>
    <property type="match status" value="1"/>
</dbReference>
<dbReference type="SUPFAM" id="SSF52540">
    <property type="entry name" value="P-loop containing nucleoside triphosphate hydrolases"/>
    <property type="match status" value="1"/>
</dbReference>
<dbReference type="PROSITE" id="PS00618">
    <property type="entry name" value="RECF_2"/>
    <property type="match status" value="1"/>
</dbReference>
<sequence>MYISNLRLQNFRNIPAKSFDFKNSINFIVGKNGSGKTSILESIYFLSHSRSFRSSQLNRIINHNADEFIIYTKAYNPDEITISLSRKKNSNNISKLNLEIQKNHTEITRNLPIQLINPESFNIINSGAQQRCKVLDWGAFYLDKTFLKIWQQTKFLVKQRNSALKQNYPYSYILSIDKKLCEFAEILDYKRQAYFTKLKPKIYEILSHFNPNLQLDIDYFRGWNLHKSLAQVLEESFNYDNKYKVTNHGPHKADIVLSVSHKPIQDIFSRGQQKLLICALKLAQGEIHNSENDNKCIYLIDDITSELDSIHTLTLFNYLKQLKSQVFITTTEKNKINEFIDTNSYILEI</sequence>
<accession>A4IXB4</accession>
<reference key="1">
    <citation type="journal article" date="2007" name="PLoS ONE">
        <title>Complete genomic characterization of a pathogenic A.II strain of Francisella tularensis subspecies tularensis.</title>
        <authorList>
            <person name="Beckstrom-Sternberg S.M."/>
            <person name="Auerbach R.K."/>
            <person name="Godbole S."/>
            <person name="Pearson J.V."/>
            <person name="Beckstrom-Sternberg J.S."/>
            <person name="Deng Z."/>
            <person name="Munk C."/>
            <person name="Kubota K."/>
            <person name="Zhou Y."/>
            <person name="Bruce D."/>
            <person name="Noronha J."/>
            <person name="Scheuermann R.H."/>
            <person name="Wang A."/>
            <person name="Wei X."/>
            <person name="Wang J."/>
            <person name="Hao J."/>
            <person name="Wagner D.M."/>
            <person name="Brettin T.S."/>
            <person name="Brown N."/>
            <person name="Gilna P."/>
            <person name="Keim P.S."/>
        </authorList>
    </citation>
    <scope>NUCLEOTIDE SEQUENCE [LARGE SCALE GENOMIC DNA]</scope>
    <source>
        <strain>WY96-3418</strain>
    </source>
</reference>
<keyword id="KW-0067">ATP-binding</keyword>
<keyword id="KW-0963">Cytoplasm</keyword>
<keyword id="KW-0227">DNA damage</keyword>
<keyword id="KW-0234">DNA repair</keyword>
<keyword id="KW-0235">DNA replication</keyword>
<keyword id="KW-0238">DNA-binding</keyword>
<keyword id="KW-0547">Nucleotide-binding</keyword>
<keyword id="KW-0742">SOS response</keyword>
<evidence type="ECO:0000255" key="1">
    <source>
        <dbReference type="HAMAP-Rule" id="MF_00365"/>
    </source>
</evidence>
<organism>
    <name type="scientific">Francisella tularensis subsp. tularensis (strain WY96-3418)</name>
    <dbReference type="NCBI Taxonomy" id="418136"/>
    <lineage>
        <taxon>Bacteria</taxon>
        <taxon>Pseudomonadati</taxon>
        <taxon>Pseudomonadota</taxon>
        <taxon>Gammaproteobacteria</taxon>
        <taxon>Thiotrichales</taxon>
        <taxon>Francisellaceae</taxon>
        <taxon>Francisella</taxon>
    </lineage>
</organism>
<comment type="function">
    <text evidence="1">The RecF protein is involved in DNA metabolism; it is required for DNA replication and normal SOS inducibility. RecF binds preferentially to single-stranded, linear DNA. It also seems to bind ATP.</text>
</comment>
<comment type="subcellular location">
    <subcellularLocation>
        <location evidence="1">Cytoplasm</location>
    </subcellularLocation>
</comment>
<comment type="similarity">
    <text evidence="1">Belongs to the RecF family.</text>
</comment>